<keyword id="KW-0963">Cytoplasm</keyword>
<keyword id="KW-0378">Hydrolase</keyword>
<keyword id="KW-0520">NAD</keyword>
<keyword id="KW-0554">One-carbon metabolism</keyword>
<keyword id="KW-1185">Reference proteome</keyword>
<reference key="1">
    <citation type="journal article" date="2002" name="DNA Res.">
        <title>Complete genome structure of the thermophilic cyanobacterium Thermosynechococcus elongatus BP-1.</title>
        <authorList>
            <person name="Nakamura Y."/>
            <person name="Kaneko T."/>
            <person name="Sato S."/>
            <person name="Ikeuchi M."/>
            <person name="Katoh H."/>
            <person name="Sasamoto S."/>
            <person name="Watanabe A."/>
            <person name="Iriguchi M."/>
            <person name="Kawashima K."/>
            <person name="Kimura T."/>
            <person name="Kishida Y."/>
            <person name="Kiyokawa C."/>
            <person name="Kohara M."/>
            <person name="Matsumoto M."/>
            <person name="Matsuno A."/>
            <person name="Nakazaki N."/>
            <person name="Shimpo S."/>
            <person name="Sugimoto M."/>
            <person name="Takeuchi C."/>
            <person name="Yamada M."/>
            <person name="Tabata S."/>
        </authorList>
    </citation>
    <scope>NUCLEOTIDE SEQUENCE [LARGE SCALE GENOMIC DNA]</scope>
    <source>
        <strain>NIES-2133 / IAM M-273 / BP-1</strain>
    </source>
</reference>
<sequence length="429" mass="46306">MVSSPIKSEAPVRHDVKDLSLAPLGQQRIEWASREMPVLRQIRDRFEKEKPFAGIRLAACCHVTTETANLAIALKAGGADAVLIASNPLSTQDDVAASLVVNYGIPVFAQKGEDTATYMRHVNIALDHRPNIIIDDGCDVVATLVKERQHQISDIIGTTEETTTGIVRLKAMFRDGVLTFPAINVNDADTKHFFDNRYGTGQSTLDGIIRATNILLAGKTVVVAGYGWCGKGTALRARGMGANVIVTEIDPVRAIEAVMDGFRVMPMLDAAPLGDIFITVTGNKHVIRAEHFAVMKDGAMVANSGHFDIEIDLATLKTLAKQVRVVRNFTEEYILPSGKSIIVLGEGRLINLAAAEGHPASVMDMSFANQALGCEYLVKNKGQLAAGIHPIPAAVDQEIARLKLQAMGIAIDTLTPEQVEYMNSWTSGT</sequence>
<dbReference type="EC" id="3.13.2.1" evidence="1"/>
<dbReference type="EMBL" id="BA000039">
    <property type="protein sequence ID" value="BAC09942.1"/>
    <property type="molecule type" value="Genomic_DNA"/>
</dbReference>
<dbReference type="RefSeq" id="NP_683180.1">
    <property type="nucleotide sequence ID" value="NC_004113.1"/>
</dbReference>
<dbReference type="RefSeq" id="WP_011058222.1">
    <property type="nucleotide sequence ID" value="NC_004113.1"/>
</dbReference>
<dbReference type="SMR" id="Q8DGC8"/>
<dbReference type="STRING" id="197221.gene:10749010"/>
<dbReference type="EnsemblBacteria" id="BAC09942">
    <property type="protein sequence ID" value="BAC09942"/>
    <property type="gene ID" value="BAC09942"/>
</dbReference>
<dbReference type="KEGG" id="tel:tll2390"/>
<dbReference type="PATRIC" id="fig|197221.4.peg.2510"/>
<dbReference type="eggNOG" id="COG0499">
    <property type="taxonomic scope" value="Bacteria"/>
</dbReference>
<dbReference type="UniPathway" id="UPA00314">
    <property type="reaction ID" value="UER00076"/>
</dbReference>
<dbReference type="Proteomes" id="UP000000440">
    <property type="component" value="Chromosome"/>
</dbReference>
<dbReference type="GO" id="GO:0005829">
    <property type="term" value="C:cytosol"/>
    <property type="evidence" value="ECO:0007669"/>
    <property type="project" value="TreeGrafter"/>
</dbReference>
<dbReference type="GO" id="GO:0004013">
    <property type="term" value="F:adenosylhomocysteinase activity"/>
    <property type="evidence" value="ECO:0007669"/>
    <property type="project" value="UniProtKB-UniRule"/>
</dbReference>
<dbReference type="GO" id="GO:0071269">
    <property type="term" value="P:L-homocysteine biosynthetic process"/>
    <property type="evidence" value="ECO:0007669"/>
    <property type="project" value="UniProtKB-UniRule"/>
</dbReference>
<dbReference type="GO" id="GO:0006730">
    <property type="term" value="P:one-carbon metabolic process"/>
    <property type="evidence" value="ECO:0007669"/>
    <property type="project" value="UniProtKB-KW"/>
</dbReference>
<dbReference type="GO" id="GO:0033353">
    <property type="term" value="P:S-adenosylmethionine cycle"/>
    <property type="evidence" value="ECO:0007669"/>
    <property type="project" value="TreeGrafter"/>
</dbReference>
<dbReference type="CDD" id="cd00401">
    <property type="entry name" value="SAHH"/>
    <property type="match status" value="1"/>
</dbReference>
<dbReference type="FunFam" id="3.40.50.720:FF:000004">
    <property type="entry name" value="Adenosylhomocysteinase"/>
    <property type="match status" value="1"/>
</dbReference>
<dbReference type="Gene3D" id="3.40.50.1480">
    <property type="entry name" value="Adenosylhomocysteinase-like"/>
    <property type="match status" value="1"/>
</dbReference>
<dbReference type="Gene3D" id="3.40.50.720">
    <property type="entry name" value="NAD(P)-binding Rossmann-like Domain"/>
    <property type="match status" value="1"/>
</dbReference>
<dbReference type="HAMAP" id="MF_00563">
    <property type="entry name" value="AdoHcyase"/>
    <property type="match status" value="1"/>
</dbReference>
<dbReference type="InterPro" id="IPR042172">
    <property type="entry name" value="Adenosylhomocyst_ase-like_sf"/>
</dbReference>
<dbReference type="InterPro" id="IPR000043">
    <property type="entry name" value="Adenosylhomocysteinase-like"/>
</dbReference>
<dbReference type="InterPro" id="IPR015878">
    <property type="entry name" value="Ado_hCys_hydrolase_NAD-bd"/>
</dbReference>
<dbReference type="InterPro" id="IPR036291">
    <property type="entry name" value="NAD(P)-bd_dom_sf"/>
</dbReference>
<dbReference type="InterPro" id="IPR020082">
    <property type="entry name" value="S-Ado-L-homoCys_hydrolase_CS"/>
</dbReference>
<dbReference type="NCBIfam" id="TIGR00936">
    <property type="entry name" value="ahcY"/>
    <property type="match status" value="1"/>
</dbReference>
<dbReference type="NCBIfam" id="NF004005">
    <property type="entry name" value="PRK05476.2-3"/>
    <property type="match status" value="1"/>
</dbReference>
<dbReference type="PANTHER" id="PTHR23420">
    <property type="entry name" value="ADENOSYLHOMOCYSTEINASE"/>
    <property type="match status" value="1"/>
</dbReference>
<dbReference type="PANTHER" id="PTHR23420:SF0">
    <property type="entry name" value="ADENOSYLHOMOCYSTEINASE"/>
    <property type="match status" value="1"/>
</dbReference>
<dbReference type="Pfam" id="PF05221">
    <property type="entry name" value="AdoHcyase"/>
    <property type="match status" value="2"/>
</dbReference>
<dbReference type="Pfam" id="PF00670">
    <property type="entry name" value="AdoHcyase_NAD"/>
    <property type="match status" value="1"/>
</dbReference>
<dbReference type="PIRSF" id="PIRSF001109">
    <property type="entry name" value="Ad_hcy_hydrolase"/>
    <property type="match status" value="1"/>
</dbReference>
<dbReference type="SMART" id="SM00996">
    <property type="entry name" value="AdoHcyase"/>
    <property type="match status" value="1"/>
</dbReference>
<dbReference type="SMART" id="SM00997">
    <property type="entry name" value="AdoHcyase_NAD"/>
    <property type="match status" value="1"/>
</dbReference>
<dbReference type="SUPFAM" id="SSF52283">
    <property type="entry name" value="Formate/glycerate dehydrogenase catalytic domain-like"/>
    <property type="match status" value="1"/>
</dbReference>
<dbReference type="SUPFAM" id="SSF51735">
    <property type="entry name" value="NAD(P)-binding Rossmann-fold domains"/>
    <property type="match status" value="1"/>
</dbReference>
<dbReference type="PROSITE" id="PS00738">
    <property type="entry name" value="ADOHCYASE_1"/>
    <property type="match status" value="1"/>
</dbReference>
<dbReference type="PROSITE" id="PS00739">
    <property type="entry name" value="ADOHCYASE_2"/>
    <property type="match status" value="1"/>
</dbReference>
<evidence type="ECO:0000255" key="1">
    <source>
        <dbReference type="HAMAP-Rule" id="MF_00563"/>
    </source>
</evidence>
<accession>Q8DGC8</accession>
<comment type="function">
    <text evidence="1">May play a key role in the regulation of the intracellular concentration of adenosylhomocysteine.</text>
</comment>
<comment type="catalytic activity">
    <reaction evidence="1">
        <text>S-adenosyl-L-homocysteine + H2O = L-homocysteine + adenosine</text>
        <dbReference type="Rhea" id="RHEA:21708"/>
        <dbReference type="ChEBI" id="CHEBI:15377"/>
        <dbReference type="ChEBI" id="CHEBI:16335"/>
        <dbReference type="ChEBI" id="CHEBI:57856"/>
        <dbReference type="ChEBI" id="CHEBI:58199"/>
        <dbReference type="EC" id="3.13.2.1"/>
    </reaction>
</comment>
<comment type="cofactor">
    <cofactor evidence="1">
        <name>NAD(+)</name>
        <dbReference type="ChEBI" id="CHEBI:57540"/>
    </cofactor>
    <text evidence="1">Binds 1 NAD(+) per subunit.</text>
</comment>
<comment type="pathway">
    <text evidence="1">Amino-acid biosynthesis; L-homocysteine biosynthesis; L-homocysteine from S-adenosyl-L-homocysteine: step 1/1.</text>
</comment>
<comment type="subcellular location">
    <subcellularLocation>
        <location evidence="1">Cytoplasm</location>
    </subcellularLocation>
</comment>
<comment type="similarity">
    <text evidence="1">Belongs to the adenosylhomocysteinase family.</text>
</comment>
<name>SAHH_THEVB</name>
<organism>
    <name type="scientific">Thermosynechococcus vestitus (strain NIES-2133 / IAM M-273 / BP-1)</name>
    <dbReference type="NCBI Taxonomy" id="197221"/>
    <lineage>
        <taxon>Bacteria</taxon>
        <taxon>Bacillati</taxon>
        <taxon>Cyanobacteriota</taxon>
        <taxon>Cyanophyceae</taxon>
        <taxon>Acaryochloridales</taxon>
        <taxon>Thermosynechococcaceae</taxon>
        <taxon>Thermosynechococcus</taxon>
    </lineage>
</organism>
<proteinExistence type="inferred from homology"/>
<protein>
    <recommendedName>
        <fullName evidence="1">Adenosylhomocysteinase</fullName>
        <ecNumber evidence="1">3.13.2.1</ecNumber>
    </recommendedName>
    <alternativeName>
        <fullName evidence="1">S-adenosyl-L-homocysteine hydrolase</fullName>
        <shortName evidence="1">AdoHcyase</shortName>
    </alternativeName>
</protein>
<gene>
    <name evidence="1" type="primary">ahcY</name>
    <name type="ordered locus">tll2390</name>
</gene>
<feature type="chain" id="PRO_0000116992" description="Adenosylhomocysteinase">
    <location>
        <begin position="1"/>
        <end position="429"/>
    </location>
</feature>
<feature type="binding site" evidence="1">
    <location>
        <position position="64"/>
    </location>
    <ligand>
        <name>substrate</name>
    </ligand>
</feature>
<feature type="binding site" evidence="1">
    <location>
        <position position="136"/>
    </location>
    <ligand>
        <name>substrate</name>
    </ligand>
</feature>
<feature type="binding site" evidence="1">
    <location>
        <position position="161"/>
    </location>
    <ligand>
        <name>substrate</name>
    </ligand>
</feature>
<feature type="binding site" evidence="1">
    <location>
        <begin position="162"/>
        <end position="164"/>
    </location>
    <ligand>
        <name>NAD(+)</name>
        <dbReference type="ChEBI" id="CHEBI:57540"/>
    </ligand>
</feature>
<feature type="binding site" evidence="1">
    <location>
        <position position="191"/>
    </location>
    <ligand>
        <name>substrate</name>
    </ligand>
</feature>
<feature type="binding site" evidence="1">
    <location>
        <position position="195"/>
    </location>
    <ligand>
        <name>substrate</name>
    </ligand>
</feature>
<feature type="binding site" evidence="1">
    <location>
        <position position="196"/>
    </location>
    <ligand>
        <name>NAD(+)</name>
        <dbReference type="ChEBI" id="CHEBI:57540"/>
    </ligand>
</feature>
<feature type="binding site" evidence="1">
    <location>
        <begin position="225"/>
        <end position="230"/>
    </location>
    <ligand>
        <name>NAD(+)</name>
        <dbReference type="ChEBI" id="CHEBI:57540"/>
    </ligand>
</feature>
<feature type="binding site" evidence="1">
    <location>
        <position position="248"/>
    </location>
    <ligand>
        <name>NAD(+)</name>
        <dbReference type="ChEBI" id="CHEBI:57540"/>
    </ligand>
</feature>
<feature type="binding site" evidence="1">
    <location>
        <position position="283"/>
    </location>
    <ligand>
        <name>NAD(+)</name>
        <dbReference type="ChEBI" id="CHEBI:57540"/>
    </ligand>
</feature>
<feature type="binding site" evidence="1">
    <location>
        <begin position="304"/>
        <end position="306"/>
    </location>
    <ligand>
        <name>NAD(+)</name>
        <dbReference type="ChEBI" id="CHEBI:57540"/>
    </ligand>
</feature>
<feature type="binding site" evidence="1">
    <location>
        <position position="351"/>
    </location>
    <ligand>
        <name>NAD(+)</name>
        <dbReference type="ChEBI" id="CHEBI:57540"/>
    </ligand>
</feature>